<keyword id="KW-1185">Reference proteome</keyword>
<name>Y095_SYNY3</name>
<organism>
    <name type="scientific">Synechocystis sp. (strain ATCC 27184 / PCC 6803 / Kazusa)</name>
    <dbReference type="NCBI Taxonomy" id="1111708"/>
    <lineage>
        <taxon>Bacteria</taxon>
        <taxon>Bacillati</taxon>
        <taxon>Cyanobacteriota</taxon>
        <taxon>Cyanophyceae</taxon>
        <taxon>Synechococcales</taxon>
        <taxon>Merismopediaceae</taxon>
        <taxon>Synechocystis</taxon>
    </lineage>
</organism>
<proteinExistence type="inferred from homology"/>
<accession>Q55884</accession>
<protein>
    <recommendedName>
        <fullName>Uncharacterized protein sll0095</fullName>
    </recommendedName>
</protein>
<gene>
    <name type="ordered locus">sll0095</name>
</gene>
<comment type="similarity">
    <text evidence="1">Belongs to the protein kinase superfamily. ADCK protein kinase family.</text>
</comment>
<dbReference type="EMBL" id="BA000022">
    <property type="protein sequence ID" value="BAA10646.1"/>
    <property type="molecule type" value="Genomic_DNA"/>
</dbReference>
<dbReference type="PIR" id="S76702">
    <property type="entry name" value="S76702"/>
</dbReference>
<dbReference type="SMR" id="Q55884"/>
<dbReference type="IntAct" id="Q55884">
    <property type="interactions" value="1"/>
</dbReference>
<dbReference type="STRING" id="1148.gene:10500151"/>
<dbReference type="PaxDb" id="1148-1208478"/>
<dbReference type="EnsemblBacteria" id="BAA10646">
    <property type="protein sequence ID" value="BAA10646"/>
    <property type="gene ID" value="BAA10646"/>
</dbReference>
<dbReference type="KEGG" id="syn:sll0095"/>
<dbReference type="eggNOG" id="COG0661">
    <property type="taxonomic scope" value="Bacteria"/>
</dbReference>
<dbReference type="InParanoid" id="Q55884"/>
<dbReference type="PhylomeDB" id="Q55884"/>
<dbReference type="Proteomes" id="UP000001425">
    <property type="component" value="Chromosome"/>
</dbReference>
<dbReference type="CDD" id="cd05121">
    <property type="entry name" value="ABC1_ADCK3-like"/>
    <property type="match status" value="1"/>
</dbReference>
<dbReference type="InterPro" id="IPR004147">
    <property type="entry name" value="ABC1_dom"/>
</dbReference>
<dbReference type="InterPro" id="IPR011009">
    <property type="entry name" value="Kinase-like_dom_sf"/>
</dbReference>
<dbReference type="InterPro" id="IPR050154">
    <property type="entry name" value="UbiB_kinase"/>
</dbReference>
<dbReference type="PANTHER" id="PTHR10566">
    <property type="entry name" value="CHAPERONE-ACTIVITY OF BC1 COMPLEX CABC1 -RELATED"/>
    <property type="match status" value="1"/>
</dbReference>
<dbReference type="PANTHER" id="PTHR10566:SF113">
    <property type="entry name" value="PROTEIN ACTIVITY OF BC1 COMPLEX KINASE 7, CHLOROPLASTIC"/>
    <property type="match status" value="1"/>
</dbReference>
<dbReference type="Pfam" id="PF03109">
    <property type="entry name" value="ABC1"/>
    <property type="match status" value="1"/>
</dbReference>
<dbReference type="SUPFAM" id="SSF56112">
    <property type="entry name" value="Protein kinase-like (PK-like)"/>
    <property type="match status" value="1"/>
</dbReference>
<evidence type="ECO:0000305" key="1"/>
<reference key="1">
    <citation type="journal article" date="1995" name="DNA Res.">
        <title>Sequence analysis of the genome of the unicellular cyanobacterium Synechocystis sp. strain PCC6803. I. Sequence features in the 1 Mb region from map positions 64% to 92% of the genome.</title>
        <authorList>
            <person name="Kaneko T."/>
            <person name="Tanaka A."/>
            <person name="Sato S."/>
            <person name="Kotani H."/>
            <person name="Sazuka T."/>
            <person name="Miyajima N."/>
            <person name="Sugiura M."/>
            <person name="Tabata S."/>
        </authorList>
    </citation>
    <scope>NUCLEOTIDE SEQUENCE [LARGE SCALE GENOMIC DNA]</scope>
    <source>
        <strain>ATCC 27184 / PCC 6803 / N-1</strain>
    </source>
</reference>
<reference key="2">
    <citation type="journal article" date="1996" name="DNA Res.">
        <title>Sequence analysis of the genome of the unicellular cyanobacterium Synechocystis sp. strain PCC6803. II. Sequence determination of the entire genome and assignment of potential protein-coding regions.</title>
        <authorList>
            <person name="Kaneko T."/>
            <person name="Sato S."/>
            <person name="Kotani H."/>
            <person name="Tanaka A."/>
            <person name="Asamizu E."/>
            <person name="Nakamura Y."/>
            <person name="Miyajima N."/>
            <person name="Hirosawa M."/>
            <person name="Sugiura M."/>
            <person name="Sasamoto S."/>
            <person name="Kimura T."/>
            <person name="Hosouchi T."/>
            <person name="Matsuno A."/>
            <person name="Muraki A."/>
            <person name="Nakazaki N."/>
            <person name="Naruo K."/>
            <person name="Okumura S."/>
            <person name="Shimpo S."/>
            <person name="Takeuchi C."/>
            <person name="Wada T."/>
            <person name="Watanabe A."/>
            <person name="Yamada M."/>
            <person name="Yasuda M."/>
            <person name="Tabata S."/>
        </authorList>
    </citation>
    <scope>NUCLEOTIDE SEQUENCE [LARGE SCALE GENOMIC DNA]</scope>
    <source>
        <strain>ATCC 27184 / PCC 6803 / Kazusa</strain>
    </source>
</reference>
<sequence length="567" mass="64991">MMLISQPMADRPLSWSGLSRRPWRRQLAVTRVFLLFVFFLSWDRLTAPRSAQRRYRRAQWLVQQLLYLGPTFIKIGQSLSTRADIIPAEYIEAFTQLQDRVPPFDSRQAIAVIEQELHGAIDEIFQQFEVTPLASASLGQVHRAVLPTGEAVVVKVQRPGLDSLLNLDFELLHQTLRLAKRWLPGFRRLAQKYEIEAIYQEFFSLLFLEIDYIHEGKNAERFRQNFADYPRVRVPEIYWQYTTRMVLTLEYLPGIKVDDRQALETAGINLDLVIQTGICAYLKQLLVDGFFQSDPHPGNMAVDSQGDLIFYDFGTMAEVKIIAKDQMVQTFFAVLRKDTNQVLEALIYMGLVEPKGDLSPIKRIINFLLDNFRDKPIDIKAFDQVGEEVYAMFQQQPFRLPPQMTFILKSISTLDGIARALDPRYNLIAASQPFIQSITVAQPKRSLAMALLQQVKQFALDQLNRPSRNQQFLQELAAKLERGELQFATRSPEGDRLLRKIHLALKSLIFACLTGFTLLSATVLLSTVYARFAVVGFGLAGLFGLFLLRSLIKLAVQEKLDRLVQKR</sequence>
<feature type="chain" id="PRO_0000200731" description="Uncharacterized protein sll0095">
    <location>
        <begin position="1"/>
        <end position="567"/>
    </location>
</feature>